<protein>
    <recommendedName>
        <fullName>General transcription factor IIF subunit 1</fullName>
    </recommendedName>
    <alternativeName>
        <fullName>General transcription factor IIF 74 kDa subunit</fullName>
    </alternativeName>
    <alternativeName>
        <fullName>Transcription initiation factor IIF subunit alpha</fullName>
        <shortName>TFIIF-alpha</shortName>
    </alternativeName>
    <alternativeName>
        <fullName>Transcription initiation factor RAP74</fullName>
    </alternativeName>
</protein>
<gene>
    <name type="primary">GTF2F1</name>
    <name type="synonym">RAP74</name>
</gene>
<reference key="1">
    <citation type="journal article" date="1992" name="Nature">
        <title>Characterization of cDNA for the large subunit of the transcription initiation factor TFIIF.</title>
        <authorList>
            <person name="Aso T."/>
            <person name="Vasavada H.A."/>
            <person name="Kawaguchi T."/>
            <person name="Germino F.J."/>
            <person name="Ganguly S."/>
            <person name="Kitajima S."/>
            <person name="Weissman S.M."/>
            <person name="Yasukochi Y."/>
        </authorList>
    </citation>
    <scope>NUCLEOTIDE SEQUENCE [MRNA]</scope>
    <scope>PARTIAL PROTEIN SEQUENCE</scope>
</reference>
<reference key="2">
    <citation type="journal article" date="1992" name="Nature">
        <title>A cDNA encoding RAP74, a general initiation factor for transcription by RNA polymerase II.</title>
        <authorList>
            <person name="Finkelstein A."/>
            <person name="Kostrub C.F."/>
            <person name="Li J."/>
            <person name="Chavez D.P."/>
            <person name="Wang B.Q."/>
            <person name="Fang S.M."/>
            <person name="Greenblatt J."/>
            <person name="Burton Z.F."/>
        </authorList>
    </citation>
    <scope>NUCLEOTIDE SEQUENCE [MRNA]</scope>
    <scope>PARTIAL PROTEIN SEQUENCE</scope>
</reference>
<reference key="3">
    <citation type="submission" date="2003-05" db="EMBL/GenBank/DDBJ databases">
        <title>Cloning of human full-length CDSs in BD Creator(TM) system donor vector.</title>
        <authorList>
            <person name="Kalnine N."/>
            <person name="Chen X."/>
            <person name="Rolfs A."/>
            <person name="Halleck A."/>
            <person name="Hines L."/>
            <person name="Eisenstein S."/>
            <person name="Koundinya M."/>
            <person name="Raphael J."/>
            <person name="Moreira D."/>
            <person name="Kelley T."/>
            <person name="LaBaer J."/>
            <person name="Lin Y."/>
            <person name="Phelan M."/>
            <person name="Farmer A."/>
        </authorList>
    </citation>
    <scope>NUCLEOTIDE SEQUENCE [LARGE SCALE MRNA]</scope>
</reference>
<reference key="4">
    <citation type="journal article" date="2004" name="Nat. Genet.">
        <title>Complete sequencing and characterization of 21,243 full-length human cDNAs.</title>
        <authorList>
            <person name="Ota T."/>
            <person name="Suzuki Y."/>
            <person name="Nishikawa T."/>
            <person name="Otsuki T."/>
            <person name="Sugiyama T."/>
            <person name="Irie R."/>
            <person name="Wakamatsu A."/>
            <person name="Hayashi K."/>
            <person name="Sato H."/>
            <person name="Nagai K."/>
            <person name="Kimura K."/>
            <person name="Makita H."/>
            <person name="Sekine M."/>
            <person name="Obayashi M."/>
            <person name="Nishi T."/>
            <person name="Shibahara T."/>
            <person name="Tanaka T."/>
            <person name="Ishii S."/>
            <person name="Yamamoto J."/>
            <person name="Saito K."/>
            <person name="Kawai Y."/>
            <person name="Isono Y."/>
            <person name="Nakamura Y."/>
            <person name="Nagahari K."/>
            <person name="Murakami K."/>
            <person name="Yasuda T."/>
            <person name="Iwayanagi T."/>
            <person name="Wagatsuma M."/>
            <person name="Shiratori A."/>
            <person name="Sudo H."/>
            <person name="Hosoiri T."/>
            <person name="Kaku Y."/>
            <person name="Kodaira H."/>
            <person name="Kondo H."/>
            <person name="Sugawara M."/>
            <person name="Takahashi M."/>
            <person name="Kanda K."/>
            <person name="Yokoi T."/>
            <person name="Furuya T."/>
            <person name="Kikkawa E."/>
            <person name="Omura Y."/>
            <person name="Abe K."/>
            <person name="Kamihara K."/>
            <person name="Katsuta N."/>
            <person name="Sato K."/>
            <person name="Tanikawa M."/>
            <person name="Yamazaki M."/>
            <person name="Ninomiya K."/>
            <person name="Ishibashi T."/>
            <person name="Yamashita H."/>
            <person name="Murakawa K."/>
            <person name="Fujimori K."/>
            <person name="Tanai H."/>
            <person name="Kimata M."/>
            <person name="Watanabe M."/>
            <person name="Hiraoka S."/>
            <person name="Chiba Y."/>
            <person name="Ishida S."/>
            <person name="Ono Y."/>
            <person name="Takiguchi S."/>
            <person name="Watanabe S."/>
            <person name="Yosida M."/>
            <person name="Hotuta T."/>
            <person name="Kusano J."/>
            <person name="Kanehori K."/>
            <person name="Takahashi-Fujii A."/>
            <person name="Hara H."/>
            <person name="Tanase T.-O."/>
            <person name="Nomura Y."/>
            <person name="Togiya S."/>
            <person name="Komai F."/>
            <person name="Hara R."/>
            <person name="Takeuchi K."/>
            <person name="Arita M."/>
            <person name="Imose N."/>
            <person name="Musashino K."/>
            <person name="Yuuki H."/>
            <person name="Oshima A."/>
            <person name="Sasaki N."/>
            <person name="Aotsuka S."/>
            <person name="Yoshikawa Y."/>
            <person name="Matsunawa H."/>
            <person name="Ichihara T."/>
            <person name="Shiohata N."/>
            <person name="Sano S."/>
            <person name="Moriya S."/>
            <person name="Momiyama H."/>
            <person name="Satoh N."/>
            <person name="Takami S."/>
            <person name="Terashima Y."/>
            <person name="Suzuki O."/>
            <person name="Nakagawa S."/>
            <person name="Senoh A."/>
            <person name="Mizoguchi H."/>
            <person name="Goto Y."/>
            <person name="Shimizu F."/>
            <person name="Wakebe H."/>
            <person name="Hishigaki H."/>
            <person name="Watanabe T."/>
            <person name="Sugiyama A."/>
            <person name="Takemoto M."/>
            <person name="Kawakami B."/>
            <person name="Yamazaki M."/>
            <person name="Watanabe K."/>
            <person name="Kumagai A."/>
            <person name="Itakura S."/>
            <person name="Fukuzumi Y."/>
            <person name="Fujimori Y."/>
            <person name="Komiyama M."/>
            <person name="Tashiro H."/>
            <person name="Tanigami A."/>
            <person name="Fujiwara T."/>
            <person name="Ono T."/>
            <person name="Yamada K."/>
            <person name="Fujii Y."/>
            <person name="Ozaki K."/>
            <person name="Hirao M."/>
            <person name="Ohmori Y."/>
            <person name="Kawabata A."/>
            <person name="Hikiji T."/>
            <person name="Kobatake N."/>
            <person name="Inagaki H."/>
            <person name="Ikema Y."/>
            <person name="Okamoto S."/>
            <person name="Okitani R."/>
            <person name="Kawakami T."/>
            <person name="Noguchi S."/>
            <person name="Itoh T."/>
            <person name="Shigeta K."/>
            <person name="Senba T."/>
            <person name="Matsumura K."/>
            <person name="Nakajima Y."/>
            <person name="Mizuno T."/>
            <person name="Morinaga M."/>
            <person name="Sasaki M."/>
            <person name="Togashi T."/>
            <person name="Oyama M."/>
            <person name="Hata H."/>
            <person name="Watanabe M."/>
            <person name="Komatsu T."/>
            <person name="Mizushima-Sugano J."/>
            <person name="Satoh T."/>
            <person name="Shirai Y."/>
            <person name="Takahashi Y."/>
            <person name="Nakagawa K."/>
            <person name="Okumura K."/>
            <person name="Nagase T."/>
            <person name="Nomura N."/>
            <person name="Kikuchi H."/>
            <person name="Masuho Y."/>
            <person name="Yamashita R."/>
            <person name="Nakai K."/>
            <person name="Yada T."/>
            <person name="Nakamura Y."/>
            <person name="Ohara O."/>
            <person name="Isogai T."/>
            <person name="Sugano S."/>
        </authorList>
    </citation>
    <scope>NUCLEOTIDE SEQUENCE [LARGE SCALE MRNA]</scope>
    <source>
        <tissue>Stomach</tissue>
    </source>
</reference>
<reference key="5">
    <citation type="submission" date="2005-09" db="EMBL/GenBank/DDBJ databases">
        <authorList>
            <person name="Mural R.J."/>
            <person name="Istrail S."/>
            <person name="Sutton G.G."/>
            <person name="Florea L."/>
            <person name="Halpern A.L."/>
            <person name="Mobarry C.M."/>
            <person name="Lippert R."/>
            <person name="Walenz B."/>
            <person name="Shatkay H."/>
            <person name="Dew I."/>
            <person name="Miller J.R."/>
            <person name="Flanigan M.J."/>
            <person name="Edwards N.J."/>
            <person name="Bolanos R."/>
            <person name="Fasulo D."/>
            <person name="Halldorsson B.V."/>
            <person name="Hannenhalli S."/>
            <person name="Turner R."/>
            <person name="Yooseph S."/>
            <person name="Lu F."/>
            <person name="Nusskern D.R."/>
            <person name="Shue B.C."/>
            <person name="Zheng X.H."/>
            <person name="Zhong F."/>
            <person name="Delcher A.L."/>
            <person name="Huson D.H."/>
            <person name="Kravitz S.A."/>
            <person name="Mouchard L."/>
            <person name="Reinert K."/>
            <person name="Remington K.A."/>
            <person name="Clark A.G."/>
            <person name="Waterman M.S."/>
            <person name="Eichler E.E."/>
            <person name="Adams M.D."/>
            <person name="Hunkapiller M.W."/>
            <person name="Myers E.W."/>
            <person name="Venter J.C."/>
        </authorList>
    </citation>
    <scope>NUCLEOTIDE SEQUENCE [LARGE SCALE GENOMIC DNA]</scope>
</reference>
<reference key="6">
    <citation type="journal article" date="2004" name="Genome Res.">
        <title>The status, quality, and expansion of the NIH full-length cDNA project: the Mammalian Gene Collection (MGC).</title>
        <authorList>
            <consortium name="The MGC Project Team"/>
        </authorList>
    </citation>
    <scope>NUCLEOTIDE SEQUENCE [LARGE SCALE MRNA]</scope>
    <source>
        <tissue>Eye</tissue>
        <tissue>Muscle</tissue>
    </source>
</reference>
<reference key="7">
    <citation type="journal article" date="1995" name="Proc. Natl. Acad. Sci. U.S.A.">
        <title>Evolutionary conservation of human TATA-binding-polypeptide-associated factors TAFII31 and TAFII80 and interactions of TAFII80 with other TAFs and with general transcription factors.</title>
        <authorList>
            <person name="Hisatake K."/>
            <person name="Ohta T."/>
            <person name="Takada R."/>
            <person name="Guermah M."/>
            <person name="Horikoshi M."/>
            <person name="Nakatani Y."/>
            <person name="Roeder R.G."/>
        </authorList>
    </citation>
    <scope>INTERACTION WITH TAF6</scope>
</reference>
<reference key="8">
    <citation type="journal article" date="1996" name="Cell">
        <title>TAFII250 is a bipartite protein kinase that phosphorylates the base transcription factor RAP74.</title>
        <authorList>
            <person name="Dikstein R."/>
            <person name="Ruppert S."/>
            <person name="Tjian R."/>
        </authorList>
    </citation>
    <scope>PHOSPHORYLATION AT SERINE RESIDUES</scope>
</reference>
<reference key="9">
    <citation type="journal article" date="1996" name="J. Biol. Chem.">
        <title>RNA polymerase II-associated protein (RAP) 74 binds transcription factor (TF) IIB and blocks TFIIB-RAP30 binding.</title>
        <authorList>
            <person name="Fang S.M."/>
            <person name="Burton Z.F."/>
        </authorList>
    </citation>
    <scope>INTERACTION WITH GTF2B</scope>
</reference>
<reference key="10">
    <citation type="journal article" date="1999" name="J. Biol. Chem.">
        <title>Kinase activity and phosphorylation of the largest subunit of TFIIF transcription factor.</title>
        <authorList>
            <person name="Rossignol M."/>
            <person name="Keriel A."/>
            <person name="Staub A."/>
            <person name="Egly J.-M."/>
        </authorList>
    </citation>
    <scope>FUNCTION</scope>
    <scope>PHOSPHORYLATION AT SER-385 AND THR-389</scope>
    <scope>MUTAGENESIS OF SER-385 AND THR-389</scope>
</reference>
<reference key="11">
    <citation type="journal article" date="2003" name="Cell Res.">
        <title>Interaction with general transcription factor IIF (TFIIF) is required for the suppression of activated transcription by RPB5-mediating protein (RMP).</title>
        <authorList>
            <person name="Wei W."/>
            <person name="Gu J.X."/>
            <person name="Zhu C.Q."/>
            <person name="Sun F.Y."/>
            <person name="Dorjsuren D."/>
            <person name="Lin Y."/>
            <person name="Murakami S."/>
        </authorList>
    </citation>
    <scope>INTERACTION WITH URI1</scope>
</reference>
<reference key="12">
    <citation type="journal article" date="2003" name="Nature">
        <title>Transcription factor IIB acetylates itself to regulate transcription.</title>
        <authorList>
            <person name="Choi C.H."/>
            <person name="Hiromura M."/>
            <person name="Usheva A."/>
        </authorList>
    </citation>
    <scope>INTERACTION WITH GTF2B</scope>
</reference>
<reference key="13">
    <citation type="journal article" date="2006" name="Cell">
        <title>Global, in vivo, and site-specific phosphorylation dynamics in signaling networks.</title>
        <authorList>
            <person name="Olsen J.V."/>
            <person name="Blagoev B."/>
            <person name="Gnad F."/>
            <person name="Macek B."/>
            <person name="Kumar C."/>
            <person name="Mortensen P."/>
            <person name="Mann M."/>
        </authorList>
    </citation>
    <scope>PHOSPHORYLATION [LARGE SCALE ANALYSIS] AT SER-217; SER-218; SER-221 AND SER-224</scope>
    <scope>IDENTIFICATION BY MASS SPECTROMETRY [LARGE SCALE ANALYSIS]</scope>
    <source>
        <tissue>Cervix carcinoma</tissue>
    </source>
</reference>
<reference key="14">
    <citation type="journal article" date="2006" name="Cell. Microbiol.">
        <title>Transcriptomic and proteomic analyses of rhabdomyosarcoma cells reveal differential cellular gene expression in response to enterovirus 71 infection.</title>
        <authorList>
            <person name="Leong W.F."/>
            <person name="Chow V.T."/>
        </authorList>
    </citation>
    <scope>INDUCTION</scope>
    <scope>IDENTIFICATION BY MASS SPECTROMETRY</scope>
</reference>
<reference key="15">
    <citation type="journal article" date="2006" name="Nat. Biotechnol.">
        <title>A probability-based approach for high-throughput protein phosphorylation analysis and site localization.</title>
        <authorList>
            <person name="Beausoleil S.A."/>
            <person name="Villen J."/>
            <person name="Gerber S.A."/>
            <person name="Rush J."/>
            <person name="Gygi S.P."/>
        </authorList>
    </citation>
    <scope>PHOSPHORYLATION [LARGE SCALE ANALYSIS] AT SER-433</scope>
    <scope>IDENTIFICATION BY MASS SPECTROMETRY [LARGE SCALE ANALYSIS]</scope>
    <source>
        <tissue>Cervix carcinoma</tissue>
    </source>
</reference>
<reference key="16">
    <citation type="journal article" date="2008" name="Proc. Natl. Acad. Sci. U.S.A.">
        <title>A quantitative atlas of mitotic phosphorylation.</title>
        <authorList>
            <person name="Dephoure N."/>
            <person name="Zhou C."/>
            <person name="Villen J."/>
            <person name="Beausoleil S.A."/>
            <person name="Bakalarski C.E."/>
            <person name="Elledge S.J."/>
            <person name="Gygi S.P."/>
        </authorList>
    </citation>
    <scope>PHOSPHORYLATION [LARGE SCALE ANALYSIS] AT SER-377; SER-380; SER-381; SER-385; THR-389; SER-431; SER-433; SER-436; THR-446 AND SER-449</scope>
    <scope>IDENTIFICATION BY MASS SPECTROMETRY [LARGE SCALE ANALYSIS]</scope>
    <source>
        <tissue>Cervix carcinoma</tissue>
    </source>
</reference>
<reference key="17">
    <citation type="journal article" date="2009" name="Anal. Chem.">
        <title>Lys-N and trypsin cover complementary parts of the phosphoproteome in a refined SCX-based approach.</title>
        <authorList>
            <person name="Gauci S."/>
            <person name="Helbig A.O."/>
            <person name="Slijper M."/>
            <person name="Krijgsveld J."/>
            <person name="Heck A.J."/>
            <person name="Mohammed S."/>
        </authorList>
    </citation>
    <scope>ACETYLATION [LARGE SCALE ANALYSIS] AT ALA-2</scope>
    <scope>CLEAVAGE OF INITIATOR METHIONINE [LARGE SCALE ANALYSIS]</scope>
    <scope>IDENTIFICATION BY MASS SPECTROMETRY [LARGE SCALE ANALYSIS]</scope>
</reference>
<reference key="18">
    <citation type="journal article" date="2009" name="Sci. Signal.">
        <title>Quantitative phosphoproteomic analysis of T cell receptor signaling reveals system-wide modulation of protein-protein interactions.</title>
        <authorList>
            <person name="Mayya V."/>
            <person name="Lundgren D.H."/>
            <person name="Hwang S.-I."/>
            <person name="Rezaul K."/>
            <person name="Wu L."/>
            <person name="Eng J.K."/>
            <person name="Rodionov V."/>
            <person name="Han D.K."/>
        </authorList>
    </citation>
    <scope>PHOSPHORYLATION [LARGE SCALE ANALYSIS] AT SER-217; SER-385 AND THR-389</scope>
    <scope>IDENTIFICATION BY MASS SPECTROMETRY [LARGE SCALE ANALYSIS]</scope>
    <source>
        <tissue>Leukemic T-cell</tissue>
    </source>
</reference>
<reference key="19">
    <citation type="journal article" date="2009" name="Science">
        <title>Lysine acetylation targets protein complexes and co-regulates major cellular functions.</title>
        <authorList>
            <person name="Choudhary C."/>
            <person name="Kumar C."/>
            <person name="Gnad F."/>
            <person name="Nielsen M.L."/>
            <person name="Rehman M."/>
            <person name="Walther T.C."/>
            <person name="Olsen J.V."/>
            <person name="Mann M."/>
        </authorList>
    </citation>
    <scope>ACETYLATION [LARGE SCALE ANALYSIS] AT LYS-407</scope>
    <scope>IDENTIFICATION BY MASS SPECTROMETRY [LARGE SCALE ANALYSIS]</scope>
</reference>
<reference key="20">
    <citation type="journal article" date="2010" name="Sci. Signal.">
        <title>Quantitative phosphoproteomics reveals widespread full phosphorylation site occupancy during mitosis.</title>
        <authorList>
            <person name="Olsen J.V."/>
            <person name="Vermeulen M."/>
            <person name="Santamaria A."/>
            <person name="Kumar C."/>
            <person name="Miller M.L."/>
            <person name="Jensen L.J."/>
            <person name="Gnad F."/>
            <person name="Cox J."/>
            <person name="Jensen T.S."/>
            <person name="Nigg E.A."/>
            <person name="Brunak S."/>
            <person name="Mann M."/>
        </authorList>
    </citation>
    <scope>PHOSPHORYLATION [LARGE SCALE ANALYSIS] AT SER-217; SER-218; SER-221; SER-224 AND SER-433</scope>
    <scope>IDENTIFICATION BY MASS SPECTROMETRY [LARGE SCALE ANALYSIS]</scope>
    <source>
        <tissue>Cervix carcinoma</tissue>
    </source>
</reference>
<reference key="21">
    <citation type="journal article" date="2011" name="BMC Syst. Biol.">
        <title>Initial characterization of the human central proteome.</title>
        <authorList>
            <person name="Burkard T.R."/>
            <person name="Planyavsky M."/>
            <person name="Kaupe I."/>
            <person name="Breitwieser F.P."/>
            <person name="Buerckstuemmer T."/>
            <person name="Bennett K.L."/>
            <person name="Superti-Furga G."/>
            <person name="Colinge J."/>
        </authorList>
    </citation>
    <scope>IDENTIFICATION BY MASS SPECTROMETRY [LARGE SCALE ANALYSIS]</scope>
</reference>
<reference key="22">
    <citation type="journal article" date="2011" name="Sci. Signal.">
        <title>System-wide temporal characterization of the proteome and phosphoproteome of human embryonic stem cell differentiation.</title>
        <authorList>
            <person name="Rigbolt K.T."/>
            <person name="Prokhorova T.A."/>
            <person name="Akimov V."/>
            <person name="Henningsen J."/>
            <person name="Johansen P.T."/>
            <person name="Kratchmarova I."/>
            <person name="Kassem M."/>
            <person name="Mann M."/>
            <person name="Olsen J.V."/>
            <person name="Blagoev B."/>
        </authorList>
    </citation>
    <scope>PHOSPHORYLATION [LARGE SCALE ANALYSIS] AT SER-217; SER-218; SER-224; THR-331; SER-385 AND SER-391</scope>
    <scope>IDENTIFICATION BY MASS SPECTROMETRY [LARGE SCALE ANALYSIS]</scope>
</reference>
<reference key="23">
    <citation type="journal article" date="2012" name="Mol. Cell. Proteomics">
        <title>Comparative large-scale characterisation of plant vs. mammal proteins reveals similar and idiosyncratic N-alpha acetylation features.</title>
        <authorList>
            <person name="Bienvenut W.V."/>
            <person name="Sumpton D."/>
            <person name="Martinez A."/>
            <person name="Lilla S."/>
            <person name="Espagne C."/>
            <person name="Meinnel T."/>
            <person name="Giglione C."/>
        </authorList>
    </citation>
    <scope>ACETYLATION [LARGE SCALE ANALYSIS] AT ALA-2</scope>
    <scope>CLEAVAGE OF INITIATOR METHIONINE [LARGE SCALE ANALYSIS]</scope>
    <scope>IDENTIFICATION BY MASS SPECTROMETRY [LARGE SCALE ANALYSIS]</scope>
</reference>
<reference key="24">
    <citation type="journal article" date="2012" name="Proc. Natl. Acad. Sci. U.S.A.">
        <title>N-terminal acetylome analyses and functional insights of the N-terminal acetyltransferase NatB.</title>
        <authorList>
            <person name="Van Damme P."/>
            <person name="Lasa M."/>
            <person name="Polevoda B."/>
            <person name="Gazquez C."/>
            <person name="Elosegui-Artola A."/>
            <person name="Kim D.S."/>
            <person name="De Juan-Pardo E."/>
            <person name="Demeyer K."/>
            <person name="Hole K."/>
            <person name="Larrea E."/>
            <person name="Timmerman E."/>
            <person name="Prieto J."/>
            <person name="Arnesen T."/>
            <person name="Sherman F."/>
            <person name="Gevaert K."/>
            <person name="Aldabe R."/>
        </authorList>
    </citation>
    <scope>ACETYLATION [LARGE SCALE ANALYSIS] AT ALA-2</scope>
    <scope>CLEAVAGE OF INITIATOR METHIONINE [LARGE SCALE ANALYSIS]</scope>
    <scope>IDENTIFICATION BY MASS SPECTROMETRY [LARGE SCALE ANALYSIS]</scope>
</reference>
<reference key="25">
    <citation type="journal article" date="2013" name="J. Proteome Res.">
        <title>Toward a comprehensive characterization of a human cancer cell phosphoproteome.</title>
        <authorList>
            <person name="Zhou H."/>
            <person name="Di Palma S."/>
            <person name="Preisinger C."/>
            <person name="Peng M."/>
            <person name="Polat A.N."/>
            <person name="Heck A.J."/>
            <person name="Mohammed S."/>
        </authorList>
    </citation>
    <scope>PHOSPHORYLATION [LARGE SCALE ANALYSIS] AT THR-156; SER-377; SER-385; THR-389; SER-431; SER-433 AND THR-437</scope>
    <scope>IDENTIFICATION BY MASS SPECTROMETRY [LARGE SCALE ANALYSIS]</scope>
    <source>
        <tissue>Cervix carcinoma</tissue>
        <tissue>Erythroleukemia</tissue>
    </source>
</reference>
<reference key="26">
    <citation type="journal article" date="2014" name="J. Proteomics">
        <title>An enzyme assisted RP-RPLC approach for in-depth analysis of human liver phosphoproteome.</title>
        <authorList>
            <person name="Bian Y."/>
            <person name="Song C."/>
            <person name="Cheng K."/>
            <person name="Dong M."/>
            <person name="Wang F."/>
            <person name="Huang J."/>
            <person name="Sun D."/>
            <person name="Wang L."/>
            <person name="Ye M."/>
            <person name="Zou H."/>
        </authorList>
    </citation>
    <scope>IDENTIFICATION BY MASS SPECTROMETRY [LARGE SCALE ANALYSIS]</scope>
    <source>
        <tissue>Liver</tissue>
    </source>
</reference>
<reference key="27">
    <citation type="journal article" date="2000" name="J. Mol. Biol.">
        <title>Novel dimerization fold of RAP30/RAP74 in human TFIIF at 1.7 A resolution.</title>
        <authorList>
            <person name="Gaiser F."/>
            <person name="Tan S."/>
            <person name="Richmond T.J."/>
        </authorList>
    </citation>
    <scope>X-RAY CRYSTALLOGRAPHY (1.7 ANGSTROMS) OF 5-153 IN COMPLEX WITH GTF2F2</scope>
</reference>
<reference key="28">
    <citation type="journal article" date="2001" name="Proc. Natl. Acad. Sci. U.S.A.">
        <title>Crystal structure of the C-terminal domain of the RAP74 subunit of human transcription factor IIF.</title>
        <authorList>
            <person name="Kamada K."/>
            <person name="De Angelis J."/>
            <person name="Roeder R.G."/>
            <person name="Burley S.K."/>
        </authorList>
    </citation>
    <scope>X-RAY CRYSTALLOGRAPHY (1.02 ANGSTROMS) OF 451-517</scope>
</reference>
<reference key="29">
    <citation type="journal article" date="2003" name="Proc. Natl. Acad. Sci. U.S.A.">
        <title>Molecular mechanism of recruitment of TFIIF-associating RNA polymerase C-terminal domain phosphatase (FCP1) by transcription factor IIF.</title>
        <authorList>
            <person name="Kamada K."/>
            <person name="Roeder R.G."/>
            <person name="Burley S.K."/>
        </authorList>
    </citation>
    <scope>X-RAY CRYSTALLOGRAPHY (2.0 ANGSTROMS) OF 449-517 IN COMPLEX WITH CTDP1</scope>
</reference>
<reference key="30">
    <citation type="journal article" date="2003" name="Biochemistry">
        <title>Solution structure of the carboxyl-terminal domain of RAP74 and NMR characterization of the FCP1-binding sites of RAP74 and human TFIIB.</title>
        <authorList>
            <person name="Nguyen B.D."/>
            <person name="Chen H.T."/>
            <person name="Kobor M.S."/>
            <person name="Greenblatt J."/>
            <person name="Legault P."/>
            <person name="Omichinski J.G."/>
        </authorList>
    </citation>
    <scope>STRUCTURE BY NMR OF 451-517</scope>
</reference>
<reference key="31">
    <citation type="journal article" date="2003" name="Proc. Natl. Acad. Sci. U.S.A.">
        <title>NMR structure of a complex containing the TFIIF subunit RAP74 and the RNA polymerase II carboxyl-terminal domain phosphatase FCP1.</title>
        <authorList>
            <person name="Nguyen B.D."/>
            <person name="Abbott K.L."/>
            <person name="Potempa K."/>
            <person name="Kobor M.S."/>
            <person name="Archambault J."/>
            <person name="Greenblatt J."/>
            <person name="Legault P."/>
            <person name="Omichinski J.G."/>
        </authorList>
    </citation>
    <scope>STRUCTURE BY NMR OF 451-517</scope>
</reference>
<reference key="32">
    <citation type="journal article" date="2016" name="Nature">
        <title>Near-atomic resolution visualization of human transcription promoter opening.</title>
        <authorList>
            <person name="He Y."/>
            <person name="Yan C."/>
            <person name="Fang J."/>
            <person name="Inouye C."/>
            <person name="Tjian R."/>
            <person name="Ivanov I."/>
            <person name="Nogales E."/>
        </authorList>
    </citation>
    <scope>STRUCTURE BY ELECTRON MICROSCOPY (3.90 ANGSTROMS)</scope>
    <scope>SUBUNIT</scope>
</reference>
<evidence type="ECO:0000256" key="1">
    <source>
        <dbReference type="SAM" id="MobiDB-lite"/>
    </source>
</evidence>
<evidence type="ECO:0000269" key="2">
    <source>
    </source>
</evidence>
<evidence type="ECO:0000269" key="3">
    <source>
    </source>
</evidence>
<evidence type="ECO:0000269" key="4">
    <source>
    </source>
</evidence>
<evidence type="ECO:0000269" key="5">
    <source>
    </source>
</evidence>
<evidence type="ECO:0000269" key="6">
    <source>
    </source>
</evidence>
<evidence type="ECO:0000269" key="7">
    <source>
    </source>
</evidence>
<evidence type="ECO:0000269" key="8">
    <source>
    </source>
</evidence>
<evidence type="ECO:0000269" key="9">
    <source>
    </source>
</evidence>
<evidence type="ECO:0000269" key="10">
    <source>
    </source>
</evidence>
<evidence type="ECO:0000269" key="11">
    <source>
    </source>
</evidence>
<evidence type="ECO:0000305" key="12"/>
<evidence type="ECO:0000305" key="13">
    <source>
    </source>
</evidence>
<evidence type="ECO:0007744" key="14">
    <source>
        <dbReference type="PDB" id="1I27"/>
    </source>
</evidence>
<evidence type="ECO:0007744" key="15">
    <source>
        <dbReference type="PDB" id="1J2X"/>
    </source>
</evidence>
<evidence type="ECO:0007744" key="16">
    <source>
    </source>
</evidence>
<evidence type="ECO:0007744" key="17">
    <source>
    </source>
</evidence>
<evidence type="ECO:0007744" key="18">
    <source>
    </source>
</evidence>
<evidence type="ECO:0007744" key="19">
    <source>
    </source>
</evidence>
<evidence type="ECO:0007744" key="20">
    <source>
    </source>
</evidence>
<evidence type="ECO:0007744" key="21">
    <source>
    </source>
</evidence>
<evidence type="ECO:0007744" key="22">
    <source>
    </source>
</evidence>
<evidence type="ECO:0007744" key="23">
    <source>
    </source>
</evidence>
<evidence type="ECO:0007744" key="24">
    <source>
    </source>
</evidence>
<evidence type="ECO:0007744" key="25">
    <source>
    </source>
</evidence>
<evidence type="ECO:0007744" key="26">
    <source>
    </source>
</evidence>
<evidence type="ECO:0007829" key="27">
    <source>
        <dbReference type="PDB" id="1F3U"/>
    </source>
</evidence>
<evidence type="ECO:0007829" key="28">
    <source>
        <dbReference type="PDB" id="1I27"/>
    </source>
</evidence>
<evidence type="ECO:0007829" key="29">
    <source>
        <dbReference type="PDB" id="7NVU"/>
    </source>
</evidence>
<sequence length="517" mass="58240">MAALGPSSQNVTEYVVRVPKNTTKKYNIMAFNAADKVNFATWNQARLERDLSNKKIYQEEEMPESGAGSEFNRKLREEARRKKYGIVLKEFRPEDQPWLLRVNGKSGRKFKGIKKGGVTENTSYYIFTQCPDGAFEAFPVHNWYNFTPLARHRTLTAEEAEEEWERRNKVLNHFSIMQQRRLKDQDQDEDEEEKEKRGRRKASELRIHDLEDDLEMSSDASDASGEEGGRVPKAKKKAPLAKGGRKKKKKKGSDDEAFEDSDDGDFEGQEVDYMSDGSSSSQEEPESKAKAPQQEEGPKGVDEQSDSSEESEEEKPPEEDKEEEEEKKAPTPQEKKRRKDSSEESDSSEESDIDSEASSALFMAKKKTPPKRERKPSGGSSRGNSRPGTPSAEGGSTSSTLRAAASKLEQGKRVSEMPAAKRLRLDTGPQSLSGKSTPQPPSGKTTPNSGDVQVTEDAVRRYLTRKPMTTKDLLKKFQTKKTGLSSEQTVNVLAQILKRLNPERKMINDKMHFSLKE</sequence>
<comment type="function">
    <text evidence="2">TFIIF is a general transcription initiation factor that binds to RNA polymerase II and helps to recruit it to the initiation complex in collaboration with TFIIB. It promotes transcription elongation.</text>
</comment>
<comment type="subunit">
    <text evidence="3 4 5 6 8 9 11">Heterodimer of an alpha and a beta subunit. Interacts with GTF2F2, CTDP1, TAF6/TAFII80 and URI1. Interacts with GTF2B (via C-terminus and preferentially via acetylated form); this interaction prevents binding of GTF2B to GTF2F2 (PubMed:12931194, PubMed:8662660). Part of TBP-based Pol II pre-initiation complex (PIC), in which Pol II core assembles with general transcription factors and other specific initiation factors including GTF2E1, GTF2E2, GTF2F1, GTF2F2, TCEA1, ERCC2, ERCC3, GTF2H2, GTF2H3, GTF2H4, GTF2H5, GTF2A1, GTF2A2, GTF2B and TBP; this large multi-subunit PIC complex mediates DNA unwinding and targets Pol II core to the transcription start site where the first phosphodiester bond forms.</text>
</comment>
<comment type="interaction">
    <interactant intactId="EBI-457886">
        <id>P35269</id>
    </interactant>
    <interactant intactId="EBI-2807555">
        <id>Q9Y5B0</id>
        <label>CTDP1</label>
    </interactant>
    <organismsDiffer>false</organismsDiffer>
    <experiments>2</experiments>
</comment>
<comment type="interaction">
    <interactant intactId="EBI-457886">
        <id>P35269</id>
    </interactant>
    <interactant intactId="EBI-1030560">
        <id>P13984</id>
        <label>GTF2F2</label>
    </interactant>
    <organismsDiffer>false</organismsDiffer>
    <experiments>28</experiments>
</comment>
<comment type="interaction">
    <interactant intactId="EBI-457886">
        <id>P35269</id>
    </interactant>
    <interactant intactId="EBI-493034">
        <id>P11831</id>
        <label>SRF</label>
    </interactant>
    <organismsDiffer>false</organismsDiffer>
    <experiments>2</experiments>
</comment>
<comment type="interaction">
    <interactant intactId="EBI-457886">
        <id>P35269</id>
    </interactant>
    <interactant intactId="EBI-491289">
        <id>P21675</id>
        <label>TAF1</label>
    </interactant>
    <organismsDiffer>false</organismsDiffer>
    <experiments>3</experiments>
</comment>
<comment type="interaction">
    <interactant intactId="EBI-457886">
        <id>P35269</id>
    </interactant>
    <interactant intactId="EBI-357067">
        <id>O94763</id>
        <label>URI1</label>
    </interactant>
    <organismsDiffer>false</organismsDiffer>
    <experiments>3</experiments>
</comment>
<comment type="subcellular location">
    <subcellularLocation>
        <location>Nucleus</location>
    </subcellularLocation>
</comment>
<comment type="induction">
    <text evidence="7">Up-regulated in response to enterovirus 71 (EV71) infection.</text>
</comment>
<comment type="PTM">
    <text evidence="2 10">Phosphorylated on Ser and other residues by TAF1 and casein kinase II-like kinases.</text>
</comment>
<comment type="similarity">
    <text evidence="12">Belongs to the TFIIF alpha subunit family.</text>
</comment>
<comment type="caution">
    <text evidence="13">Was reported to have a protein kinase activity and to autophosphorylates on Ser-385 and Thr-389.</text>
</comment>
<proteinExistence type="evidence at protein level"/>
<name>T2FA_HUMAN</name>
<organism>
    <name type="scientific">Homo sapiens</name>
    <name type="common">Human</name>
    <dbReference type="NCBI Taxonomy" id="9606"/>
    <lineage>
        <taxon>Eukaryota</taxon>
        <taxon>Metazoa</taxon>
        <taxon>Chordata</taxon>
        <taxon>Craniata</taxon>
        <taxon>Vertebrata</taxon>
        <taxon>Euteleostomi</taxon>
        <taxon>Mammalia</taxon>
        <taxon>Eutheria</taxon>
        <taxon>Euarchontoglires</taxon>
        <taxon>Primates</taxon>
        <taxon>Haplorrhini</taxon>
        <taxon>Catarrhini</taxon>
        <taxon>Hominidae</taxon>
        <taxon>Homo</taxon>
    </lineage>
</organism>
<feature type="initiator methionine" description="Removed" evidence="19 24 25">
    <location>
        <position position="1"/>
    </location>
</feature>
<feature type="chain" id="PRO_0000211231" description="General transcription factor IIF subunit 1">
    <location>
        <begin position="2"/>
        <end position="517"/>
    </location>
</feature>
<feature type="region of interest" description="Disordered" evidence="1">
    <location>
        <begin position="178"/>
        <end position="466"/>
    </location>
</feature>
<feature type="compositionally biased region" description="Basic residues" evidence="1">
    <location>
        <begin position="232"/>
        <end position="251"/>
    </location>
</feature>
<feature type="compositionally biased region" description="Acidic residues" evidence="1">
    <location>
        <begin position="255"/>
        <end position="270"/>
    </location>
</feature>
<feature type="compositionally biased region" description="Acidic residues" evidence="1">
    <location>
        <begin position="303"/>
        <end position="325"/>
    </location>
</feature>
<feature type="compositionally biased region" description="Acidic residues" evidence="1">
    <location>
        <begin position="343"/>
        <end position="355"/>
    </location>
</feature>
<feature type="compositionally biased region" description="Basic residues" evidence="1">
    <location>
        <begin position="364"/>
        <end position="374"/>
    </location>
</feature>
<feature type="compositionally biased region" description="Low complexity" evidence="1">
    <location>
        <begin position="377"/>
        <end position="391"/>
    </location>
</feature>
<feature type="compositionally biased region" description="Polar residues" evidence="1">
    <location>
        <begin position="428"/>
        <end position="452"/>
    </location>
</feature>
<feature type="binding site" evidence="14 15">
    <location>
        <position position="503"/>
    </location>
    <ligand>
        <name>Zn(2+)</name>
        <dbReference type="ChEBI" id="CHEBI:29105"/>
    </ligand>
</feature>
<feature type="binding site" evidence="14 15">
    <location>
        <position position="512"/>
    </location>
    <ligand>
        <name>Zn(2+)</name>
        <dbReference type="ChEBI" id="CHEBI:29105"/>
    </ligand>
</feature>
<feature type="binding site" evidence="14 15">
    <location>
        <position position="517"/>
    </location>
    <ligand>
        <name>Zn(2+)</name>
        <dbReference type="ChEBI" id="CHEBI:29105"/>
    </ligand>
</feature>
<feature type="modified residue" description="N-acetylalanine" evidence="19 24 25">
    <location>
        <position position="2"/>
    </location>
</feature>
<feature type="modified residue" description="Phosphothreonine" evidence="26">
    <location>
        <position position="156"/>
    </location>
</feature>
<feature type="modified residue" description="Phosphoserine" evidence="17 21 22 23">
    <location>
        <position position="217"/>
    </location>
</feature>
<feature type="modified residue" description="Phosphoserine" evidence="17 22 23">
    <location>
        <position position="218"/>
    </location>
</feature>
<feature type="modified residue" description="Phosphoserine" evidence="17 22">
    <location>
        <position position="221"/>
    </location>
</feature>
<feature type="modified residue" description="Phosphoserine" evidence="17 22 23">
    <location>
        <position position="224"/>
    </location>
</feature>
<feature type="modified residue" description="Phosphothreonine" evidence="23">
    <location>
        <position position="331"/>
    </location>
</feature>
<feature type="modified residue" description="Phosphoserine" evidence="18 26">
    <location>
        <position position="377"/>
    </location>
</feature>
<feature type="modified residue" description="Phosphoserine" evidence="18">
    <location>
        <position position="380"/>
    </location>
</feature>
<feature type="modified residue" description="Phosphoserine" evidence="18">
    <location>
        <position position="381"/>
    </location>
</feature>
<feature type="modified residue" description="Phosphoserine" evidence="2 18 21 23 26">
    <location>
        <position position="385"/>
    </location>
</feature>
<feature type="modified residue" description="Phosphothreonine" evidence="2 18 21 26">
    <location>
        <position position="389"/>
    </location>
</feature>
<feature type="modified residue" description="Phosphoserine" evidence="23">
    <location>
        <position position="391"/>
    </location>
</feature>
<feature type="modified residue" description="N6-acetyllysine" evidence="20">
    <location>
        <position position="407"/>
    </location>
</feature>
<feature type="modified residue" description="Phosphoserine" evidence="18 26">
    <location>
        <position position="431"/>
    </location>
</feature>
<feature type="modified residue" description="Phosphoserine" evidence="16 18 22 26">
    <location>
        <position position="433"/>
    </location>
</feature>
<feature type="modified residue" description="Phosphoserine" evidence="18">
    <location>
        <position position="436"/>
    </location>
</feature>
<feature type="modified residue" description="Phosphothreonine" evidence="26">
    <location>
        <position position="437"/>
    </location>
</feature>
<feature type="modified residue" description="Phosphothreonine" evidence="18">
    <location>
        <position position="446"/>
    </location>
</feature>
<feature type="modified residue" description="Phosphoserine" evidence="18">
    <location>
        <position position="449"/>
    </location>
</feature>
<feature type="sequence variant" id="VAR_039004" description="In dbSNP:rs34826931.">
    <original>A</original>
    <variation>V</variation>
    <location>
        <position position="3"/>
    </location>
</feature>
<feature type="mutagenesis site" description="Eliminates putative kinase activity; when associated with A-389." evidence="2">
    <original>S</original>
    <variation>A</variation>
    <location>
        <position position="385"/>
    </location>
</feature>
<feature type="mutagenesis site" description="Eliminates putative kinase activity; when associated with A-385." evidence="2">
    <original>T</original>
    <variation>A</variation>
    <location>
        <position position="389"/>
    </location>
</feature>
<feature type="sequence conflict" description="In Ref. 2; CAA45404." evidence="12" ref="2">
    <original>V</original>
    <variation>I</variation>
    <location>
        <position position="231"/>
    </location>
</feature>
<feature type="sequence conflict" description="In Ref. 1; CAA45408." evidence="12" ref="1">
    <original>L</original>
    <variation>F</variation>
    <location>
        <position position="361"/>
    </location>
</feature>
<feature type="helix" evidence="29">
    <location>
        <begin position="6"/>
        <end position="9"/>
    </location>
</feature>
<feature type="strand" evidence="27">
    <location>
        <begin position="10"/>
        <end position="17"/>
    </location>
</feature>
<feature type="strand" evidence="27">
    <location>
        <begin position="23"/>
        <end position="31"/>
    </location>
</feature>
<feature type="helix" evidence="27">
    <location>
        <begin position="33"/>
        <end position="35"/>
    </location>
</feature>
<feature type="helix" evidence="27">
    <location>
        <begin position="39"/>
        <end position="41"/>
    </location>
</feature>
<feature type="strand" evidence="27">
    <location>
        <begin position="45"/>
        <end position="49"/>
    </location>
</feature>
<feature type="helix" evidence="27">
    <location>
        <begin position="52"/>
        <end position="55"/>
    </location>
</feature>
<feature type="strand" evidence="27">
    <location>
        <begin position="58"/>
        <end position="61"/>
    </location>
</feature>
<feature type="helix" evidence="27">
    <location>
        <begin position="76"/>
        <end position="78"/>
    </location>
</feature>
<feature type="strand" evidence="27">
    <location>
        <begin position="84"/>
        <end position="87"/>
    </location>
</feature>
<feature type="strand" evidence="27">
    <location>
        <begin position="98"/>
        <end position="104"/>
    </location>
</feature>
<feature type="strand" evidence="27">
    <location>
        <begin position="109"/>
        <end position="114"/>
    </location>
</feature>
<feature type="strand" evidence="27">
    <location>
        <begin position="120"/>
        <end position="129"/>
    </location>
</feature>
<feature type="strand" evidence="27">
    <location>
        <begin position="135"/>
        <end position="148"/>
    </location>
</feature>
<feature type="helix" evidence="27">
    <location>
        <begin position="149"/>
        <end position="151"/>
    </location>
</feature>
<feature type="helix" evidence="27">
    <location>
        <begin position="157"/>
        <end position="167"/>
    </location>
</feature>
<feature type="helix" evidence="29">
    <location>
        <begin position="175"/>
        <end position="179"/>
    </location>
</feature>
<feature type="helix" evidence="28">
    <location>
        <begin position="456"/>
        <end position="465"/>
    </location>
</feature>
<feature type="helix" evidence="28">
    <location>
        <begin position="470"/>
        <end position="475"/>
    </location>
</feature>
<feature type="helix" evidence="28">
    <location>
        <begin position="479"/>
        <end position="482"/>
    </location>
</feature>
<feature type="helix" evidence="28">
    <location>
        <begin position="486"/>
        <end position="500"/>
    </location>
</feature>
<feature type="strand" evidence="28">
    <location>
        <begin position="503"/>
        <end position="507"/>
    </location>
</feature>
<feature type="strand" evidence="28">
    <location>
        <begin position="510"/>
        <end position="515"/>
    </location>
</feature>
<dbReference type="EMBL" id="X64037">
    <property type="protein sequence ID" value="CAA45408.1"/>
    <property type="molecule type" value="mRNA"/>
</dbReference>
<dbReference type="EMBL" id="X64002">
    <property type="protein sequence ID" value="CAA45404.1"/>
    <property type="molecule type" value="mRNA"/>
</dbReference>
<dbReference type="EMBL" id="BT007097">
    <property type="protein sequence ID" value="AAP35761.1"/>
    <property type="molecule type" value="mRNA"/>
</dbReference>
<dbReference type="EMBL" id="AK315240">
    <property type="protein sequence ID" value="BAG37667.1"/>
    <property type="molecule type" value="mRNA"/>
</dbReference>
<dbReference type="EMBL" id="CH471139">
    <property type="protein sequence ID" value="EAW69098.1"/>
    <property type="molecule type" value="Genomic_DNA"/>
</dbReference>
<dbReference type="EMBL" id="BC000120">
    <property type="protein sequence ID" value="AAH00120.1"/>
    <property type="molecule type" value="mRNA"/>
</dbReference>
<dbReference type="EMBL" id="BC013007">
    <property type="protein sequence ID" value="AAH13007.1"/>
    <property type="molecule type" value="mRNA"/>
</dbReference>
<dbReference type="CCDS" id="CCDS12165.1"/>
<dbReference type="PIR" id="S20248">
    <property type="entry name" value="S20248"/>
</dbReference>
<dbReference type="RefSeq" id="NP_002087.2">
    <property type="nucleotide sequence ID" value="NM_002096.3"/>
</dbReference>
<dbReference type="PDB" id="1F3U">
    <property type="method" value="X-ray"/>
    <property type="resolution" value="1.70 A"/>
    <property type="chains" value="B/D/F/H=2-172"/>
</dbReference>
<dbReference type="PDB" id="1I27">
    <property type="method" value="X-ray"/>
    <property type="resolution" value="1.02 A"/>
    <property type="chains" value="A=449-517"/>
</dbReference>
<dbReference type="PDB" id="1J2X">
    <property type="method" value="X-ray"/>
    <property type="resolution" value="2.00 A"/>
    <property type="chains" value="A=449-517"/>
</dbReference>
<dbReference type="PDB" id="1NHA">
    <property type="method" value="NMR"/>
    <property type="chains" value="A=436-517"/>
</dbReference>
<dbReference type="PDB" id="1ONV">
    <property type="method" value="NMR"/>
    <property type="chains" value="A=436-517"/>
</dbReference>
<dbReference type="PDB" id="2K7L">
    <property type="method" value="NMR"/>
    <property type="chains" value="A=451-517"/>
</dbReference>
<dbReference type="PDB" id="5IY6">
    <property type="method" value="EM"/>
    <property type="resolution" value="7.20 A"/>
    <property type="chains" value="S=1-517"/>
</dbReference>
<dbReference type="PDB" id="5IY7">
    <property type="method" value="EM"/>
    <property type="resolution" value="8.60 A"/>
    <property type="chains" value="S=1-517"/>
</dbReference>
<dbReference type="PDB" id="5IY8">
    <property type="method" value="EM"/>
    <property type="resolution" value="7.90 A"/>
    <property type="chains" value="S=1-517"/>
</dbReference>
<dbReference type="PDB" id="5IY9">
    <property type="method" value="EM"/>
    <property type="resolution" value="6.30 A"/>
    <property type="chains" value="S=1-517"/>
</dbReference>
<dbReference type="PDB" id="5IYA">
    <property type="method" value="EM"/>
    <property type="resolution" value="5.40 A"/>
    <property type="chains" value="S=1-517"/>
</dbReference>
<dbReference type="PDB" id="5IYB">
    <property type="method" value="EM"/>
    <property type="resolution" value="3.90 A"/>
    <property type="chains" value="S=1-517"/>
</dbReference>
<dbReference type="PDB" id="5IYC">
    <property type="method" value="EM"/>
    <property type="resolution" value="3.90 A"/>
    <property type="chains" value="S=1-517"/>
</dbReference>
<dbReference type="PDB" id="5IYD">
    <property type="method" value="EM"/>
    <property type="resolution" value="3.90 A"/>
    <property type="chains" value="S=1-517"/>
</dbReference>
<dbReference type="PDB" id="6O9L">
    <property type="method" value="EM"/>
    <property type="resolution" value="7.20 A"/>
    <property type="chains" value="S=1-517"/>
</dbReference>
<dbReference type="PDB" id="7EDX">
    <property type="method" value="EM"/>
    <property type="resolution" value="4.50 A"/>
    <property type="chains" value="S=1-517"/>
</dbReference>
<dbReference type="PDB" id="7EG7">
    <property type="method" value="EM"/>
    <property type="resolution" value="6.20 A"/>
    <property type="chains" value="S=1-517"/>
</dbReference>
<dbReference type="PDB" id="7EG8">
    <property type="method" value="EM"/>
    <property type="resolution" value="7.40 A"/>
    <property type="chains" value="S=1-517"/>
</dbReference>
<dbReference type="PDB" id="7EG9">
    <property type="method" value="EM"/>
    <property type="resolution" value="3.70 A"/>
    <property type="chains" value="S=1-517"/>
</dbReference>
<dbReference type="PDB" id="7EGA">
    <property type="method" value="EM"/>
    <property type="resolution" value="4.10 A"/>
    <property type="chains" value="S=1-517"/>
</dbReference>
<dbReference type="PDB" id="7EGB">
    <property type="method" value="EM"/>
    <property type="resolution" value="3.30 A"/>
    <property type="chains" value="S=1-517"/>
</dbReference>
<dbReference type="PDB" id="7EGC">
    <property type="method" value="EM"/>
    <property type="resolution" value="3.90 A"/>
    <property type="chains" value="S=1-517"/>
</dbReference>
<dbReference type="PDB" id="7ENA">
    <property type="method" value="EM"/>
    <property type="resolution" value="4.07 A"/>
    <property type="chains" value="FA=1-517"/>
</dbReference>
<dbReference type="PDB" id="7ENC">
    <property type="method" value="EM"/>
    <property type="resolution" value="4.13 A"/>
    <property type="chains" value="FA=1-517"/>
</dbReference>
<dbReference type="PDB" id="7LBM">
    <property type="method" value="EM"/>
    <property type="resolution" value="4.80 A"/>
    <property type="chains" value="S=1-517"/>
</dbReference>
<dbReference type="PDB" id="7NVR">
    <property type="method" value="EM"/>
    <property type="resolution" value="4.50 A"/>
    <property type="chains" value="Q=1-517"/>
</dbReference>
<dbReference type="PDB" id="7NVS">
    <property type="method" value="EM"/>
    <property type="resolution" value="2.80 A"/>
    <property type="chains" value="Q=1-517"/>
</dbReference>
<dbReference type="PDB" id="7NVT">
    <property type="method" value="EM"/>
    <property type="resolution" value="2.90 A"/>
    <property type="chains" value="Q=1-517"/>
</dbReference>
<dbReference type="PDB" id="7NVU">
    <property type="method" value="EM"/>
    <property type="resolution" value="2.50 A"/>
    <property type="chains" value="Q=1-517"/>
</dbReference>
<dbReference type="PDB" id="7NVY">
    <property type="method" value="EM"/>
    <property type="resolution" value="7.30 A"/>
    <property type="chains" value="Q=1-517"/>
</dbReference>
<dbReference type="PDB" id="7NVZ">
    <property type="method" value="EM"/>
    <property type="resolution" value="7.20 A"/>
    <property type="chains" value="Q=1-517"/>
</dbReference>
<dbReference type="PDB" id="7NW0">
    <property type="method" value="EM"/>
    <property type="resolution" value="6.60 A"/>
    <property type="chains" value="Q=1-517"/>
</dbReference>
<dbReference type="PDB" id="7ZWD">
    <property type="method" value="EM"/>
    <property type="resolution" value="3.00 A"/>
    <property type="chains" value="Q=1-517"/>
</dbReference>
<dbReference type="PDB" id="7ZX7">
    <property type="method" value="EM"/>
    <property type="resolution" value="3.40 A"/>
    <property type="chains" value="Q=1-517"/>
</dbReference>
<dbReference type="PDB" id="7ZX8">
    <property type="method" value="EM"/>
    <property type="resolution" value="3.00 A"/>
    <property type="chains" value="Q=1-517"/>
</dbReference>
<dbReference type="PDB" id="8BVW">
    <property type="method" value="EM"/>
    <property type="resolution" value="4.00 A"/>
    <property type="chains" value="Q=1-517"/>
</dbReference>
<dbReference type="PDB" id="8BYQ">
    <property type="method" value="EM"/>
    <property type="resolution" value="4.10 A"/>
    <property type="chains" value="Q=1-517"/>
</dbReference>
<dbReference type="PDB" id="8BZ1">
    <property type="method" value="EM"/>
    <property type="resolution" value="3.80 A"/>
    <property type="chains" value="Q=1-517"/>
</dbReference>
<dbReference type="PDB" id="8GXQ">
    <property type="method" value="EM"/>
    <property type="resolution" value="5.04 A"/>
    <property type="chains" value="FA=1-517"/>
</dbReference>
<dbReference type="PDB" id="8GXS">
    <property type="method" value="EM"/>
    <property type="resolution" value="4.16 A"/>
    <property type="chains" value="FA=1-517"/>
</dbReference>
<dbReference type="PDB" id="8S51">
    <property type="method" value="EM"/>
    <property type="resolution" value="3.10 A"/>
    <property type="chains" value="Q=1-517"/>
</dbReference>
<dbReference type="PDB" id="8S52">
    <property type="method" value="EM"/>
    <property type="resolution" value="2.90 A"/>
    <property type="chains" value="Q=1-517"/>
</dbReference>
<dbReference type="PDB" id="8S54">
    <property type="method" value="EM"/>
    <property type="resolution" value="3.40 A"/>
    <property type="chains" value="Q=1-517"/>
</dbReference>
<dbReference type="PDB" id="8S55">
    <property type="method" value="EM"/>
    <property type="resolution" value="3.40 A"/>
    <property type="chains" value="Q=1-517"/>
</dbReference>
<dbReference type="PDB" id="8S5N">
    <property type="method" value="EM"/>
    <property type="resolution" value="3.40 A"/>
    <property type="chains" value="Q=1-517"/>
</dbReference>
<dbReference type="PDB" id="8WAK">
    <property type="method" value="EM"/>
    <property type="resolution" value="5.47 A"/>
    <property type="chains" value="S=1-517"/>
</dbReference>
<dbReference type="PDB" id="8WAL">
    <property type="method" value="EM"/>
    <property type="resolution" value="8.52 A"/>
    <property type="chains" value="S=1-517"/>
</dbReference>
<dbReference type="PDB" id="8WAN">
    <property type="method" value="EM"/>
    <property type="resolution" value="6.07 A"/>
    <property type="chains" value="S=1-517"/>
</dbReference>
<dbReference type="PDB" id="8WAO">
    <property type="method" value="EM"/>
    <property type="resolution" value="6.40 A"/>
    <property type="chains" value="S=1-517"/>
</dbReference>
<dbReference type="PDB" id="8WAP">
    <property type="method" value="EM"/>
    <property type="resolution" value="5.85 A"/>
    <property type="chains" value="S=1-517"/>
</dbReference>
<dbReference type="PDB" id="8WAQ">
    <property type="method" value="EM"/>
    <property type="resolution" value="6.29 A"/>
    <property type="chains" value="S=1-517"/>
</dbReference>
<dbReference type="PDB" id="8WAR">
    <property type="method" value="EM"/>
    <property type="resolution" value="7.20 A"/>
    <property type="chains" value="S=1-517"/>
</dbReference>
<dbReference type="PDB" id="8WAS">
    <property type="method" value="EM"/>
    <property type="resolution" value="6.13 A"/>
    <property type="chains" value="S=1-517"/>
</dbReference>
<dbReference type="PDB" id="8WAT">
    <property type="method" value="EM"/>
    <property type="resolution" value="2.82 A"/>
    <property type="chains" value="S=1-517"/>
</dbReference>
<dbReference type="PDB" id="8WAU">
    <property type="method" value="EM"/>
    <property type="resolution" value="2.78 A"/>
    <property type="chains" value="S=1-517"/>
</dbReference>
<dbReference type="PDB" id="8WAV">
    <property type="method" value="EM"/>
    <property type="resolution" value="2.72 A"/>
    <property type="chains" value="S=1-517"/>
</dbReference>
<dbReference type="PDB" id="8WAW">
    <property type="method" value="EM"/>
    <property type="resolution" value="3.02 A"/>
    <property type="chains" value="S=1-517"/>
</dbReference>
<dbReference type="PDB" id="8WAX">
    <property type="method" value="EM"/>
    <property type="resolution" value="2.75 A"/>
    <property type="chains" value="S=1-517"/>
</dbReference>
<dbReference type="PDB" id="8WAY">
    <property type="method" value="EM"/>
    <property type="resolution" value="2.85 A"/>
    <property type="chains" value="S=1-517"/>
</dbReference>
<dbReference type="PDB" id="8WAZ">
    <property type="method" value="EM"/>
    <property type="resolution" value="2.76 A"/>
    <property type="chains" value="S=1-517"/>
</dbReference>
<dbReference type="PDB" id="8WB0">
    <property type="method" value="EM"/>
    <property type="resolution" value="2.94 A"/>
    <property type="chains" value="S=1-517"/>
</dbReference>
<dbReference type="PDBsum" id="1F3U"/>
<dbReference type="PDBsum" id="1I27"/>
<dbReference type="PDBsum" id="1J2X"/>
<dbReference type="PDBsum" id="1NHA"/>
<dbReference type="PDBsum" id="1ONV"/>
<dbReference type="PDBsum" id="2K7L"/>
<dbReference type="PDBsum" id="5IY6"/>
<dbReference type="PDBsum" id="5IY7"/>
<dbReference type="PDBsum" id="5IY8"/>
<dbReference type="PDBsum" id="5IY9"/>
<dbReference type="PDBsum" id="5IYA"/>
<dbReference type="PDBsum" id="5IYB"/>
<dbReference type="PDBsum" id="5IYC"/>
<dbReference type="PDBsum" id="5IYD"/>
<dbReference type="PDBsum" id="6O9L"/>
<dbReference type="PDBsum" id="7EDX"/>
<dbReference type="PDBsum" id="7EG7"/>
<dbReference type="PDBsum" id="7EG8"/>
<dbReference type="PDBsum" id="7EG9"/>
<dbReference type="PDBsum" id="7EGA"/>
<dbReference type="PDBsum" id="7EGB"/>
<dbReference type="PDBsum" id="7EGC"/>
<dbReference type="PDBsum" id="7ENA"/>
<dbReference type="PDBsum" id="7ENC"/>
<dbReference type="PDBsum" id="7LBM"/>
<dbReference type="PDBsum" id="7NVR"/>
<dbReference type="PDBsum" id="7NVS"/>
<dbReference type="PDBsum" id="7NVT"/>
<dbReference type="PDBsum" id="7NVU"/>
<dbReference type="PDBsum" id="7NVY"/>
<dbReference type="PDBsum" id="7NVZ"/>
<dbReference type="PDBsum" id="7NW0"/>
<dbReference type="PDBsum" id="7ZWD"/>
<dbReference type="PDBsum" id="7ZX7"/>
<dbReference type="PDBsum" id="7ZX8"/>
<dbReference type="PDBsum" id="8BVW"/>
<dbReference type="PDBsum" id="8BYQ"/>
<dbReference type="PDBsum" id="8BZ1"/>
<dbReference type="PDBsum" id="8GXQ"/>
<dbReference type="PDBsum" id="8GXS"/>
<dbReference type="PDBsum" id="8S51"/>
<dbReference type="PDBsum" id="8S52"/>
<dbReference type="PDBsum" id="8S54"/>
<dbReference type="PDBsum" id="8S55"/>
<dbReference type="PDBsum" id="8S5N"/>
<dbReference type="PDBsum" id="8WAK"/>
<dbReference type="PDBsum" id="8WAL"/>
<dbReference type="PDBsum" id="8WAN"/>
<dbReference type="PDBsum" id="8WAO"/>
<dbReference type="PDBsum" id="8WAP"/>
<dbReference type="PDBsum" id="8WAQ"/>
<dbReference type="PDBsum" id="8WAR"/>
<dbReference type="PDBsum" id="8WAS"/>
<dbReference type="PDBsum" id="8WAT"/>
<dbReference type="PDBsum" id="8WAU"/>
<dbReference type="PDBsum" id="8WAV"/>
<dbReference type="PDBsum" id="8WAW"/>
<dbReference type="PDBsum" id="8WAX"/>
<dbReference type="PDBsum" id="8WAY"/>
<dbReference type="PDBsum" id="8WAZ"/>
<dbReference type="PDBsum" id="8WB0"/>
<dbReference type="BMRB" id="P35269"/>
<dbReference type="EMDB" id="EMD-12610"/>
<dbReference type="EMDB" id="EMD-12611"/>
<dbReference type="EMDB" id="EMD-12612"/>
<dbReference type="EMDB" id="EMD-12613"/>
<dbReference type="EMDB" id="EMD-12617"/>
<dbReference type="EMDB" id="EMD-12618"/>
<dbReference type="EMDB" id="EMD-12619"/>
<dbReference type="EMDB" id="EMD-14997"/>
<dbReference type="EMDB" id="EMD-15006"/>
<dbReference type="EMDB" id="EMD-15007"/>
<dbReference type="EMDB" id="EMD-16274"/>
<dbReference type="EMDB" id="EMD-16331"/>
<dbReference type="EMDB" id="EMD-16335"/>
<dbReference type="EMDB" id="EMD-19718"/>
<dbReference type="EMDB" id="EMD-19719"/>
<dbReference type="EMDB" id="EMD-19720"/>
<dbReference type="EMDB" id="EMD-19726"/>
<dbReference type="EMDB" id="EMD-19743"/>
<dbReference type="EMDB" id="EMD-23255"/>
<dbReference type="EMDB" id="EMD-31075"/>
<dbReference type="EMDB" id="EMD-31107"/>
<dbReference type="EMDB" id="EMD-31108"/>
<dbReference type="EMDB" id="EMD-31109"/>
<dbReference type="EMDB" id="EMD-31110"/>
<dbReference type="EMDB" id="EMD-31111"/>
<dbReference type="EMDB" id="EMD-31112"/>
<dbReference type="EMDB" id="EMD-31204"/>
<dbReference type="EMDB" id="EMD-31207"/>
<dbReference type="EMDB" id="EMD-34359"/>
<dbReference type="EMDB" id="EMD-34360"/>
<dbReference type="EMDB" id="EMD-37395"/>
<dbReference type="EMDB" id="EMD-37396"/>
<dbReference type="EMDB" id="EMD-37398"/>
<dbReference type="EMDB" id="EMD-37399"/>
<dbReference type="EMDB" id="EMD-37400"/>
<dbReference type="EMDB" id="EMD-37401"/>
<dbReference type="EMDB" id="EMD-37402"/>
<dbReference type="EMDB" id="EMD-37403"/>
<dbReference type="EMDB" id="EMD-37404"/>
<dbReference type="EMDB" id="EMD-37405"/>
<dbReference type="EMDB" id="EMD-37406"/>
<dbReference type="EMDB" id="EMD-37407"/>
<dbReference type="EMDB" id="EMD-37408"/>
<dbReference type="EMDB" id="EMD-37409"/>
<dbReference type="EMDB" id="EMD-37410"/>
<dbReference type="EMDB" id="EMD-37411"/>
<dbReference type="EMDB" id="EMD-8132"/>
<dbReference type="EMDB" id="EMD-8133"/>
<dbReference type="EMDB" id="EMD-8134"/>
<dbReference type="EMDB" id="EMD-8135"/>
<dbReference type="EMDB" id="EMD-8136"/>
<dbReference type="EMDB" id="EMD-8137"/>
<dbReference type="EMDB" id="EMD-8138"/>
<dbReference type="SMR" id="P35269"/>
<dbReference type="BioGRID" id="109217">
    <property type="interactions" value="224"/>
</dbReference>
<dbReference type="ComplexPortal" id="CPX-79">
    <property type="entry name" value="General transcription factor TFIIF complex"/>
</dbReference>
<dbReference type="CORUM" id="P35269"/>
<dbReference type="DIP" id="DIP-677N"/>
<dbReference type="FunCoup" id="P35269">
    <property type="interactions" value="2376"/>
</dbReference>
<dbReference type="IntAct" id="P35269">
    <property type="interactions" value="102"/>
</dbReference>
<dbReference type="MINT" id="P35269"/>
<dbReference type="STRING" id="9606.ENSP00000377969"/>
<dbReference type="GlyGen" id="P35269">
    <property type="glycosylation" value="3 sites, 1 N-linked glycan (1 site), 1 O-linked glycan (1 site)"/>
</dbReference>
<dbReference type="iPTMnet" id="P35269"/>
<dbReference type="MetOSite" id="P35269"/>
<dbReference type="PhosphoSitePlus" id="P35269"/>
<dbReference type="SwissPalm" id="P35269"/>
<dbReference type="BioMuta" id="GTF2F1"/>
<dbReference type="DMDM" id="46397744"/>
<dbReference type="jPOST" id="P35269"/>
<dbReference type="MassIVE" id="P35269"/>
<dbReference type="PaxDb" id="9606-ENSP00000377969"/>
<dbReference type="PeptideAtlas" id="P35269"/>
<dbReference type="ProteomicsDB" id="55019"/>
<dbReference type="Pumba" id="P35269"/>
<dbReference type="TopDownProteomics" id="P35269"/>
<dbReference type="Antibodypedia" id="11855">
    <property type="antibodies" value="306 antibodies from 27 providers"/>
</dbReference>
<dbReference type="DNASU" id="2962"/>
<dbReference type="Ensembl" id="ENST00000394456.10">
    <property type="protein sequence ID" value="ENSP00000377969.3"/>
    <property type="gene ID" value="ENSG00000125651.14"/>
</dbReference>
<dbReference type="GeneID" id="2962"/>
<dbReference type="KEGG" id="hsa:2962"/>
<dbReference type="MANE-Select" id="ENST00000394456.10">
    <property type="protein sequence ID" value="ENSP00000377969.3"/>
    <property type="RefSeq nucleotide sequence ID" value="NM_002096.3"/>
    <property type="RefSeq protein sequence ID" value="NP_002087.2"/>
</dbReference>
<dbReference type="UCSC" id="uc002meq.3">
    <property type="organism name" value="human"/>
</dbReference>
<dbReference type="AGR" id="HGNC:4652"/>
<dbReference type="CTD" id="2962"/>
<dbReference type="DisGeNET" id="2962"/>
<dbReference type="GeneCards" id="GTF2F1"/>
<dbReference type="HGNC" id="HGNC:4652">
    <property type="gene designation" value="GTF2F1"/>
</dbReference>
<dbReference type="HPA" id="ENSG00000125651">
    <property type="expression patterns" value="Low tissue specificity"/>
</dbReference>
<dbReference type="MIM" id="189968">
    <property type="type" value="gene"/>
</dbReference>
<dbReference type="neXtProt" id="NX_P35269"/>
<dbReference type="OpenTargets" id="ENSG00000125651"/>
<dbReference type="PharmGKB" id="PA29038"/>
<dbReference type="VEuPathDB" id="HostDB:ENSG00000125651"/>
<dbReference type="eggNOG" id="KOG2393">
    <property type="taxonomic scope" value="Eukaryota"/>
</dbReference>
<dbReference type="GeneTree" id="ENSGT00440000038032"/>
<dbReference type="HOGENOM" id="CLU_027572_2_0_1"/>
<dbReference type="InParanoid" id="P35269"/>
<dbReference type="OMA" id="VTCGKTM"/>
<dbReference type="OrthoDB" id="76676at2759"/>
<dbReference type="PAN-GO" id="P35269">
    <property type="GO annotations" value="4 GO annotations based on evolutionary models"/>
</dbReference>
<dbReference type="PhylomeDB" id="P35269"/>
<dbReference type="TreeFam" id="TF313850"/>
<dbReference type="PathwayCommons" id="P35269"/>
<dbReference type="Reactome" id="R-HSA-112382">
    <property type="pathway name" value="Formation of RNA Pol II elongation complex"/>
</dbReference>
<dbReference type="Reactome" id="R-HSA-113418">
    <property type="pathway name" value="Formation of the Early Elongation Complex"/>
</dbReference>
<dbReference type="Reactome" id="R-HSA-167152">
    <property type="pathway name" value="Formation of HIV elongation complex in the absence of HIV Tat"/>
</dbReference>
<dbReference type="Reactome" id="R-HSA-167158">
    <property type="pathway name" value="Formation of the HIV-1 Early Elongation Complex"/>
</dbReference>
<dbReference type="Reactome" id="R-HSA-167160">
    <property type="pathway name" value="RNA Pol II CTD phosphorylation and interaction with CE during HIV infection"/>
</dbReference>
<dbReference type="Reactome" id="R-HSA-167161">
    <property type="pathway name" value="HIV Transcription Initiation"/>
</dbReference>
<dbReference type="Reactome" id="R-HSA-167162">
    <property type="pathway name" value="RNA Polymerase II HIV Promoter Escape"/>
</dbReference>
<dbReference type="Reactome" id="R-HSA-167172">
    <property type="pathway name" value="Transcription of the HIV genome"/>
</dbReference>
<dbReference type="Reactome" id="R-HSA-167200">
    <property type="pathway name" value="Formation of HIV-1 elongation complex containing HIV-1 Tat"/>
</dbReference>
<dbReference type="Reactome" id="R-HSA-167238">
    <property type="pathway name" value="Pausing and recovery of Tat-mediated HIV elongation"/>
</dbReference>
<dbReference type="Reactome" id="R-HSA-167242">
    <property type="pathway name" value="Abortive elongation of HIV-1 transcript in the absence of Tat"/>
</dbReference>
<dbReference type="Reactome" id="R-HSA-167243">
    <property type="pathway name" value="Tat-mediated HIV elongation arrest and recovery"/>
</dbReference>
<dbReference type="Reactome" id="R-HSA-167246">
    <property type="pathway name" value="Tat-mediated elongation of the HIV-1 transcript"/>
</dbReference>
<dbReference type="Reactome" id="R-HSA-167287">
    <property type="pathway name" value="HIV elongation arrest and recovery"/>
</dbReference>
<dbReference type="Reactome" id="R-HSA-167290">
    <property type="pathway name" value="Pausing and recovery of HIV elongation"/>
</dbReference>
<dbReference type="Reactome" id="R-HSA-168325">
    <property type="pathway name" value="Viral Messenger RNA Synthesis"/>
</dbReference>
<dbReference type="Reactome" id="R-HSA-674695">
    <property type="pathway name" value="RNA Polymerase II Pre-transcription Events"/>
</dbReference>
<dbReference type="Reactome" id="R-HSA-6796648">
    <property type="pathway name" value="TP53 Regulates Transcription of DNA Repair Genes"/>
</dbReference>
<dbReference type="Reactome" id="R-HSA-6803529">
    <property type="pathway name" value="FGFR2 alternative splicing"/>
</dbReference>
<dbReference type="Reactome" id="R-HSA-6807505">
    <property type="pathway name" value="RNA polymerase II transcribes snRNA genes"/>
</dbReference>
<dbReference type="Reactome" id="R-HSA-72086">
    <property type="pathway name" value="mRNA Capping"/>
</dbReference>
<dbReference type="Reactome" id="R-HSA-72163">
    <property type="pathway name" value="mRNA Splicing - Major Pathway"/>
</dbReference>
<dbReference type="Reactome" id="R-HSA-72165">
    <property type="pathway name" value="mRNA Splicing - Minor Pathway"/>
</dbReference>
<dbReference type="Reactome" id="R-HSA-72203">
    <property type="pathway name" value="Processing of Capped Intron-Containing Pre-mRNA"/>
</dbReference>
<dbReference type="Reactome" id="R-HSA-73776">
    <property type="pathway name" value="RNA Polymerase II Promoter Escape"/>
</dbReference>
<dbReference type="Reactome" id="R-HSA-73779">
    <property type="pathway name" value="RNA Polymerase II Transcription Pre-Initiation And Promoter Opening"/>
</dbReference>
<dbReference type="Reactome" id="R-HSA-75953">
    <property type="pathway name" value="RNA Polymerase II Transcription Initiation"/>
</dbReference>
<dbReference type="Reactome" id="R-HSA-75955">
    <property type="pathway name" value="RNA Polymerase II Transcription Elongation"/>
</dbReference>
<dbReference type="Reactome" id="R-HSA-76042">
    <property type="pathway name" value="RNA Polymerase II Transcription Initiation And Promoter Clearance"/>
</dbReference>
<dbReference type="Reactome" id="R-HSA-77075">
    <property type="pathway name" value="RNA Pol II CTD phosphorylation and interaction with CE"/>
</dbReference>
<dbReference type="Reactome" id="R-HSA-8851708">
    <property type="pathway name" value="Signaling by FGFR2 IIIa TM"/>
</dbReference>
<dbReference type="Reactome" id="R-HSA-9018519">
    <property type="pathway name" value="Estrogen-dependent gene expression"/>
</dbReference>
<dbReference type="SignaLink" id="P35269"/>
<dbReference type="SIGNOR" id="P35269"/>
<dbReference type="BioGRID-ORCS" id="2962">
    <property type="hits" value="371 hits in 1165 CRISPR screens"/>
</dbReference>
<dbReference type="CD-CODE" id="6F24707C">
    <property type="entry name" value="Cajal body"/>
</dbReference>
<dbReference type="CD-CODE" id="91857CE7">
    <property type="entry name" value="Nucleolus"/>
</dbReference>
<dbReference type="ChiTaRS" id="GTF2F1">
    <property type="organism name" value="human"/>
</dbReference>
<dbReference type="EvolutionaryTrace" id="P35269"/>
<dbReference type="GeneWiki" id="GTF2F1"/>
<dbReference type="GenomeRNAi" id="2962"/>
<dbReference type="Pharos" id="P35269">
    <property type="development level" value="Tbio"/>
</dbReference>
<dbReference type="PRO" id="PR:P35269"/>
<dbReference type="Proteomes" id="UP000005640">
    <property type="component" value="Chromosome 19"/>
</dbReference>
<dbReference type="RNAct" id="P35269">
    <property type="molecule type" value="protein"/>
</dbReference>
<dbReference type="Bgee" id="ENSG00000125651">
    <property type="expression patterns" value="Expressed in cerebellum and 101 other cell types or tissues"/>
</dbReference>
<dbReference type="ExpressionAtlas" id="P35269">
    <property type="expression patterns" value="baseline and differential"/>
</dbReference>
<dbReference type="GO" id="GO:0030054">
    <property type="term" value="C:cell junction"/>
    <property type="evidence" value="ECO:0000314"/>
    <property type="project" value="HPA"/>
</dbReference>
<dbReference type="GO" id="GO:0043231">
    <property type="term" value="C:intracellular membrane-bounded organelle"/>
    <property type="evidence" value="ECO:0000314"/>
    <property type="project" value="HPA"/>
</dbReference>
<dbReference type="GO" id="GO:0005654">
    <property type="term" value="C:nucleoplasm"/>
    <property type="evidence" value="ECO:0000314"/>
    <property type="project" value="HPA"/>
</dbReference>
<dbReference type="GO" id="GO:0005634">
    <property type="term" value="C:nucleus"/>
    <property type="evidence" value="ECO:0000315"/>
    <property type="project" value="CAFA"/>
</dbReference>
<dbReference type="GO" id="GO:0032991">
    <property type="term" value="C:protein-containing complex"/>
    <property type="evidence" value="ECO:0000315"/>
    <property type="project" value="CAFA"/>
</dbReference>
<dbReference type="GO" id="GO:0005669">
    <property type="term" value="C:transcription factor TFIID complex"/>
    <property type="evidence" value="ECO:0000314"/>
    <property type="project" value="UniProtKB"/>
</dbReference>
<dbReference type="GO" id="GO:0005674">
    <property type="term" value="C:transcription factor TFIIF complex"/>
    <property type="evidence" value="ECO:0000353"/>
    <property type="project" value="ComplexPortal"/>
</dbReference>
<dbReference type="GO" id="GO:0003677">
    <property type="term" value="F:DNA binding"/>
    <property type="evidence" value="ECO:0007669"/>
    <property type="project" value="UniProtKB-KW"/>
</dbReference>
<dbReference type="GO" id="GO:0019211">
    <property type="term" value="F:phosphatase activator activity"/>
    <property type="evidence" value="ECO:0000314"/>
    <property type="project" value="UniProtKB"/>
</dbReference>
<dbReference type="GO" id="GO:1990841">
    <property type="term" value="F:promoter-specific chromatin binding"/>
    <property type="evidence" value="ECO:0000314"/>
    <property type="project" value="UniProtKB"/>
</dbReference>
<dbReference type="GO" id="GO:0019904">
    <property type="term" value="F:protein domain specific binding"/>
    <property type="evidence" value="ECO:0000353"/>
    <property type="project" value="CAFA"/>
</dbReference>
<dbReference type="GO" id="GO:0019903">
    <property type="term" value="F:protein phosphatase binding"/>
    <property type="evidence" value="ECO:0000353"/>
    <property type="project" value="CAFA"/>
</dbReference>
<dbReference type="GO" id="GO:0003723">
    <property type="term" value="F:RNA binding"/>
    <property type="evidence" value="ECO:0007005"/>
    <property type="project" value="UniProtKB"/>
</dbReference>
<dbReference type="GO" id="GO:0016251">
    <property type="term" value="F:RNA polymerase II general transcription initiation factor activity"/>
    <property type="evidence" value="ECO:0000314"/>
    <property type="project" value="ARUK-UCL"/>
</dbReference>
<dbReference type="GO" id="GO:0001091">
    <property type="term" value="F:RNA polymerase II general transcription initiation factor binding"/>
    <property type="evidence" value="ECO:0000353"/>
    <property type="project" value="BHF-UCL"/>
</dbReference>
<dbReference type="GO" id="GO:0001096">
    <property type="term" value="F:TFIIF-class transcription factor complex binding"/>
    <property type="evidence" value="ECO:0000318"/>
    <property type="project" value="GO_Central"/>
</dbReference>
<dbReference type="GO" id="GO:0032091">
    <property type="term" value="P:negative regulation of protein binding"/>
    <property type="evidence" value="ECO:0000315"/>
    <property type="project" value="UniProtKB"/>
</dbReference>
<dbReference type="GO" id="GO:0045944">
    <property type="term" value="P:positive regulation of transcription by RNA polymerase II"/>
    <property type="evidence" value="ECO:0000314"/>
    <property type="project" value="ComplexPortal"/>
</dbReference>
<dbReference type="GO" id="GO:0032968">
    <property type="term" value="P:positive regulation of transcription elongation by RNA polymerase II"/>
    <property type="evidence" value="ECO:0007669"/>
    <property type="project" value="InterPro"/>
</dbReference>
<dbReference type="GO" id="GO:0009615">
    <property type="term" value="P:response to virus"/>
    <property type="evidence" value="ECO:0000270"/>
    <property type="project" value="UniProtKB"/>
</dbReference>
<dbReference type="GO" id="GO:0006366">
    <property type="term" value="P:transcription by RNA polymerase II"/>
    <property type="evidence" value="ECO:0000304"/>
    <property type="project" value="ProtInc"/>
</dbReference>
<dbReference type="GO" id="GO:0006368">
    <property type="term" value="P:transcription elongation by RNA polymerase II"/>
    <property type="evidence" value="ECO:0000314"/>
    <property type="project" value="ComplexPortal"/>
</dbReference>
<dbReference type="GO" id="GO:0006367">
    <property type="term" value="P:transcription initiation at RNA polymerase II promoter"/>
    <property type="evidence" value="ECO:0000314"/>
    <property type="project" value="ARUK-UCL"/>
</dbReference>
<dbReference type="CDD" id="cd00240">
    <property type="entry name" value="TFIIFa"/>
    <property type="match status" value="1"/>
</dbReference>
<dbReference type="FunFam" id="1.10.10.10:FF:000290">
    <property type="entry name" value="General transcription factor IIF subunit 1"/>
    <property type="match status" value="1"/>
</dbReference>
<dbReference type="Gene3D" id="1.10.10.10">
    <property type="entry name" value="Winged helix-like DNA-binding domain superfamily/Winged helix DNA-binding domain"/>
    <property type="match status" value="1"/>
</dbReference>
<dbReference type="IDEAL" id="IID00369"/>
<dbReference type="InterPro" id="IPR008851">
    <property type="entry name" value="TFIIF-alpha"/>
</dbReference>
<dbReference type="InterPro" id="IPR011039">
    <property type="entry name" value="TFIIF_interaction"/>
</dbReference>
<dbReference type="InterPro" id="IPR036388">
    <property type="entry name" value="WH-like_DNA-bd_sf"/>
</dbReference>
<dbReference type="InterPro" id="IPR036390">
    <property type="entry name" value="WH_DNA-bd_sf"/>
</dbReference>
<dbReference type="PANTHER" id="PTHR13011:SF0">
    <property type="entry name" value="GENERAL TRANSCRIPTION FACTOR IIF SUBUNIT 1"/>
    <property type="match status" value="1"/>
</dbReference>
<dbReference type="PANTHER" id="PTHR13011">
    <property type="entry name" value="TFIIF-ALPHA"/>
    <property type="match status" value="1"/>
</dbReference>
<dbReference type="Pfam" id="PF05793">
    <property type="entry name" value="TFIIF_alpha"/>
    <property type="match status" value="1"/>
</dbReference>
<dbReference type="SUPFAM" id="SSF50916">
    <property type="entry name" value="Rap30/74 interaction domains"/>
    <property type="match status" value="2"/>
</dbReference>
<dbReference type="SUPFAM" id="SSF46785">
    <property type="entry name" value="Winged helix' DNA-binding domain"/>
    <property type="match status" value="1"/>
</dbReference>
<accession>P35269</accession>
<accession>B2RCS0</accession>
<accession>Q9BWN0</accession>
<keyword id="KW-0002">3D-structure</keyword>
<keyword id="KW-0007">Acetylation</keyword>
<keyword id="KW-0903">Direct protein sequencing</keyword>
<keyword id="KW-0238">DNA-binding</keyword>
<keyword id="KW-0539">Nucleus</keyword>
<keyword id="KW-0597">Phosphoprotein</keyword>
<keyword id="KW-1267">Proteomics identification</keyword>
<keyword id="KW-1185">Reference proteome</keyword>
<keyword id="KW-0804">Transcription</keyword>
<keyword id="KW-0805">Transcription regulation</keyword>